<organism>
    <name type="scientific">Homo sapiens</name>
    <name type="common">Human</name>
    <dbReference type="NCBI Taxonomy" id="9606"/>
    <lineage>
        <taxon>Eukaryota</taxon>
        <taxon>Metazoa</taxon>
        <taxon>Chordata</taxon>
        <taxon>Craniata</taxon>
        <taxon>Vertebrata</taxon>
        <taxon>Euteleostomi</taxon>
        <taxon>Mammalia</taxon>
        <taxon>Eutheria</taxon>
        <taxon>Euarchontoglires</taxon>
        <taxon>Primates</taxon>
        <taxon>Haplorrhini</taxon>
        <taxon>Catarrhini</taxon>
        <taxon>Hominidae</taxon>
        <taxon>Homo</taxon>
    </lineage>
</organism>
<proteinExistence type="evidence at protein level"/>
<gene>
    <name type="primary">CRYGC</name>
    <name type="synonym">CRYG3</name>
</gene>
<sequence length="174" mass="20879">MGKITFYEDRAFQGRSYETTTDCPNLQPYFSRCNSIRVESGCWMLYERPNYQGQQYLLRRGEYPDYQQWMGLSDSIRSCCLIPQTVSHRLRLYEREDHKGLMMELSEDCPSIQDRFHLSEIRSLHVLEGCWVLYELPNYRGRQYLLRPQEYRRCQDWGAMDAKAGSLRRVVDLY</sequence>
<feature type="initiator methionine" description="Removed" evidence="15">
    <location>
        <position position="1"/>
    </location>
</feature>
<feature type="chain" id="PRO_0000057587" description="Gamma-crystallin C">
    <location>
        <begin position="2"/>
        <end position="174"/>
    </location>
</feature>
<feature type="domain" description="Beta/gamma crystallin 'Greek key' 1" evidence="2">
    <location>
        <begin position="2"/>
        <end position="40"/>
    </location>
</feature>
<feature type="domain" description="Beta/gamma crystallin 'Greek key' 2" evidence="2">
    <location>
        <begin position="41"/>
        <end position="83"/>
    </location>
</feature>
<feature type="domain" description="Beta/gamma crystallin 'Greek key' 3" evidence="2">
    <location>
        <begin position="88"/>
        <end position="128"/>
    </location>
</feature>
<feature type="domain" description="Beta/gamma crystallin 'Greek key' 4" evidence="2">
    <location>
        <begin position="129"/>
        <end position="171"/>
    </location>
</feature>
<feature type="region of interest" description="Connecting peptide">
    <location>
        <begin position="84"/>
        <end position="87"/>
    </location>
</feature>
<feature type="modified residue" description="S-methylcysteine" evidence="7">
    <location>
        <position position="23"/>
    </location>
</feature>
<feature type="sequence variant" id="VAR_021142" description="In CTRCT2; reduces protein-protein interactions in vivo; dbSNP:rs104893618." evidence="3 6 14">
    <original>T</original>
    <variation>P</variation>
    <location>
        <position position="5"/>
    </location>
</feature>
<feature type="sequence variant" id="VAR_038432" description="In dbSNP:rs2242072.">
    <original>F</original>
    <variation>L</variation>
    <location>
        <position position="6"/>
    </location>
</feature>
<feature type="sequence variant" id="VAR_021143" description="In dbSNP:rs61751949." evidence="5 9 12">
    <original>R</original>
    <variation>H</variation>
    <location>
        <position position="48"/>
    </location>
</feature>
<feature type="sequence variant" id="VAR_084798" description="In CTRCT2; uncertain significance." evidence="13">
    <original>S</original>
    <variation>F</variation>
    <location>
        <position position="78"/>
    </location>
</feature>
<feature type="sequence variant" id="VAR_067212" description="In CTRCT2; dbSNP:rs137853924." evidence="10">
    <original>G</original>
    <variation>C</variation>
    <location>
        <position position="129"/>
    </location>
</feature>
<feature type="sequence variant" id="VAR_084799" description="In CTRCT2; uncertain significance." evidence="12">
    <location>
        <begin position="144"/>
        <end position="174"/>
    </location>
</feature>
<feature type="sequence variant" id="VAR_021144" description="In CTRCT2; uncertain significance; dbSNP:rs28931604." evidence="5 8">
    <original>R</original>
    <variation>W</variation>
    <location>
        <position position="168"/>
    </location>
</feature>
<feature type="strand" evidence="18">
    <location>
        <begin position="4"/>
        <end position="9"/>
    </location>
</feature>
<feature type="turn" evidence="18">
    <location>
        <begin position="10"/>
        <end position="12"/>
    </location>
</feature>
<feature type="strand" evidence="18">
    <location>
        <begin position="13"/>
        <end position="21"/>
    </location>
</feature>
<feature type="turn" evidence="18">
    <location>
        <begin position="27"/>
        <end position="29"/>
    </location>
</feature>
<feature type="strand" evidence="18">
    <location>
        <begin position="34"/>
        <end position="38"/>
    </location>
</feature>
<feature type="strand" evidence="18">
    <location>
        <begin position="40"/>
        <end position="48"/>
    </location>
</feature>
<feature type="turn" evidence="18">
    <location>
        <begin position="49"/>
        <end position="51"/>
    </location>
</feature>
<feature type="strand" evidence="18">
    <location>
        <begin position="52"/>
        <end position="58"/>
    </location>
</feature>
<feature type="strand" evidence="18">
    <location>
        <begin position="60"/>
        <end position="65"/>
    </location>
</feature>
<feature type="helix" evidence="18">
    <location>
        <begin position="66"/>
        <end position="69"/>
    </location>
</feature>
<feature type="strand" evidence="18">
    <location>
        <begin position="78"/>
        <end position="82"/>
    </location>
</feature>
<feature type="strand" evidence="18">
    <location>
        <begin position="89"/>
        <end position="95"/>
    </location>
</feature>
<feature type="turn" evidence="18">
    <location>
        <begin position="96"/>
        <end position="98"/>
    </location>
</feature>
<feature type="strand" evidence="18">
    <location>
        <begin position="99"/>
        <end position="105"/>
    </location>
</feature>
<feature type="helix" evidence="18">
    <location>
        <begin position="112"/>
        <end position="115"/>
    </location>
</feature>
<feature type="strand" evidence="18">
    <location>
        <begin position="122"/>
        <end position="129"/>
    </location>
</feature>
<feature type="strand" evidence="18">
    <location>
        <begin position="131"/>
        <end position="136"/>
    </location>
</feature>
<feature type="turn" evidence="18">
    <location>
        <begin position="137"/>
        <end position="139"/>
    </location>
</feature>
<feature type="strand" evidence="18">
    <location>
        <begin position="140"/>
        <end position="146"/>
    </location>
</feature>
<feature type="strand" evidence="18">
    <location>
        <begin position="148"/>
        <end position="151"/>
    </location>
</feature>
<feature type="turn" evidence="18">
    <location>
        <begin position="154"/>
        <end position="158"/>
    </location>
</feature>
<feature type="strand" evidence="18">
    <location>
        <begin position="165"/>
        <end position="169"/>
    </location>
</feature>
<keyword id="KW-0002">3D-structure</keyword>
<keyword id="KW-0898">Cataract</keyword>
<keyword id="KW-0903">Direct protein sequencing</keyword>
<keyword id="KW-0225">Disease variant</keyword>
<keyword id="KW-0273">Eye lens protein</keyword>
<keyword id="KW-0488">Methylation</keyword>
<keyword id="KW-1267">Proteomics identification</keyword>
<keyword id="KW-1185">Reference proteome</keyword>
<keyword id="KW-0677">Repeat</keyword>
<accession>P07315</accession>
<accession>Q53R50</accession>
<protein>
    <recommendedName>
        <fullName>Gamma-crystallin C</fullName>
    </recommendedName>
    <alternativeName>
        <fullName evidence="16">Gamma-C-crystallin</fullName>
    </alternativeName>
    <alternativeName>
        <fullName>Gamma-crystallin 2-1</fullName>
    </alternativeName>
    <alternativeName>
        <fullName>Gamma-crystallin 3</fullName>
    </alternativeName>
</protein>
<dbReference type="EMBL" id="M11973">
    <property type="protein sequence ID" value="AAA52114.1"/>
    <property type="molecule type" value="Genomic_DNA"/>
</dbReference>
<dbReference type="EMBL" id="M11972">
    <property type="protein sequence ID" value="AAA52114.1"/>
    <property type="status" value="JOINED"/>
    <property type="molecule type" value="Genomic_DNA"/>
</dbReference>
<dbReference type="EMBL" id="K03004">
    <property type="protein sequence ID" value="AAA52111.1"/>
    <property type="molecule type" value="Genomic_DNA"/>
</dbReference>
<dbReference type="EMBL" id="K03003">
    <property type="protein sequence ID" value="AAA52111.1"/>
    <property type="status" value="JOINED"/>
    <property type="molecule type" value="Genomic_DNA"/>
</dbReference>
<dbReference type="EMBL" id="M19364">
    <property type="protein sequence ID" value="AAA52110.1"/>
    <property type="molecule type" value="Genomic_DNA"/>
</dbReference>
<dbReference type="EMBL" id="U66582">
    <property type="protein sequence ID" value="AAC50899.1"/>
    <property type="molecule type" value="mRNA"/>
</dbReference>
<dbReference type="EMBL" id="AC093698">
    <property type="protein sequence ID" value="AAY24042.1"/>
    <property type="molecule type" value="Genomic_DNA"/>
</dbReference>
<dbReference type="EMBL" id="CH471063">
    <property type="protein sequence ID" value="EAW70433.1"/>
    <property type="molecule type" value="Genomic_DNA"/>
</dbReference>
<dbReference type="EMBL" id="BC074954">
    <property type="protein sequence ID" value="AAH74954.1"/>
    <property type="molecule type" value="mRNA"/>
</dbReference>
<dbReference type="EMBL" id="BC074955">
    <property type="protein sequence ID" value="AAH74955.1"/>
    <property type="molecule type" value="mRNA"/>
</dbReference>
<dbReference type="CCDS" id="CCDS2379.1"/>
<dbReference type="PIR" id="B24520">
    <property type="entry name" value="CYHUG2"/>
</dbReference>
<dbReference type="RefSeq" id="NP_066269.1">
    <property type="nucleotide sequence ID" value="NM_020989.4"/>
</dbReference>
<dbReference type="RefSeq" id="XP_011508964.1">
    <property type="nucleotide sequence ID" value="XM_011510662.1"/>
</dbReference>
<dbReference type="RefSeq" id="XP_054188132.1">
    <property type="nucleotide sequence ID" value="XM_054332157.1"/>
</dbReference>
<dbReference type="RefSeq" id="XP_054196615.1">
    <property type="nucleotide sequence ID" value="XM_054340640.1"/>
</dbReference>
<dbReference type="PDB" id="2NBR">
    <property type="method" value="NMR"/>
    <property type="chains" value="A=2-174"/>
</dbReference>
<dbReference type="PDBsum" id="2NBR"/>
<dbReference type="SMR" id="P07315"/>
<dbReference type="BioGRID" id="107810">
    <property type="interactions" value="36"/>
</dbReference>
<dbReference type="FunCoup" id="P07315">
    <property type="interactions" value="329"/>
</dbReference>
<dbReference type="IntAct" id="P07315">
    <property type="interactions" value="6"/>
</dbReference>
<dbReference type="MINT" id="P07315"/>
<dbReference type="STRING" id="9606.ENSP00000282141"/>
<dbReference type="ChEMBL" id="CHEMBL4296285"/>
<dbReference type="GlyGen" id="P07315">
    <property type="glycosylation" value="1 site, 1 O-linked glycan (1 site)"/>
</dbReference>
<dbReference type="iPTMnet" id="P07315"/>
<dbReference type="PhosphoSitePlus" id="P07315"/>
<dbReference type="BioMuta" id="CRYGC"/>
<dbReference type="DMDM" id="117464"/>
<dbReference type="MassIVE" id="P07315"/>
<dbReference type="PaxDb" id="9606-ENSP00000282141"/>
<dbReference type="PeptideAtlas" id="P07315"/>
<dbReference type="ProteomicsDB" id="51985"/>
<dbReference type="Antibodypedia" id="34194">
    <property type="antibodies" value="173 antibodies from 27 providers"/>
</dbReference>
<dbReference type="DNASU" id="1420"/>
<dbReference type="Ensembl" id="ENST00000282141.4">
    <property type="protein sequence ID" value="ENSP00000282141.3"/>
    <property type="gene ID" value="ENSG00000163254.5"/>
</dbReference>
<dbReference type="Ensembl" id="ENST00000646204.2">
    <property type="protein sequence ID" value="ENSP00000496418.1"/>
    <property type="gene ID" value="ENSG00000285011.2"/>
</dbReference>
<dbReference type="GeneID" id="1420"/>
<dbReference type="KEGG" id="hsa:1420"/>
<dbReference type="MANE-Select" id="ENST00000282141.4">
    <property type="protein sequence ID" value="ENSP00000282141.3"/>
    <property type="RefSeq nucleotide sequence ID" value="NM_020989.4"/>
    <property type="RefSeq protein sequence ID" value="NP_066269.1"/>
</dbReference>
<dbReference type="UCSC" id="uc002vco.4">
    <property type="organism name" value="human"/>
</dbReference>
<dbReference type="AGR" id="HGNC:2410"/>
<dbReference type="CTD" id="1420"/>
<dbReference type="DisGeNET" id="1420"/>
<dbReference type="GeneCards" id="CRYGC"/>
<dbReference type="HGNC" id="HGNC:2410">
    <property type="gene designation" value="CRYGC"/>
</dbReference>
<dbReference type="HPA" id="ENSG00000163254">
    <property type="expression patterns" value="Tissue enriched (testis)"/>
</dbReference>
<dbReference type="MalaCards" id="CRYGC"/>
<dbReference type="MIM" id="123680">
    <property type="type" value="gene"/>
</dbReference>
<dbReference type="MIM" id="604307">
    <property type="type" value="phenotype"/>
</dbReference>
<dbReference type="neXtProt" id="NX_P07315"/>
<dbReference type="OpenTargets" id="ENSG00000163254"/>
<dbReference type="Orphanet" id="1377">
    <property type="disease" value="Cataract-microcornea syndrome"/>
</dbReference>
<dbReference type="Orphanet" id="441452">
    <property type="disease" value="Early-onset lamellar cataract"/>
</dbReference>
<dbReference type="Orphanet" id="98991">
    <property type="disease" value="Early-onset nuclear cataract"/>
</dbReference>
<dbReference type="Orphanet" id="98984">
    <property type="disease" value="Pulverulent cataract"/>
</dbReference>
<dbReference type="PharmGKB" id="PA26917"/>
<dbReference type="VEuPathDB" id="HostDB:ENSG00000163254"/>
<dbReference type="eggNOG" id="ENOG502RXJY">
    <property type="taxonomic scope" value="Eukaryota"/>
</dbReference>
<dbReference type="GeneTree" id="ENSGT00940000159232"/>
<dbReference type="HOGENOM" id="CLU_081883_1_1_1"/>
<dbReference type="InParanoid" id="P07315"/>
<dbReference type="OMA" id="DDCSCIQ"/>
<dbReference type="OrthoDB" id="8407241at2759"/>
<dbReference type="PAN-GO" id="P07315">
    <property type="GO annotations" value="3 GO annotations based on evolutionary models"/>
</dbReference>
<dbReference type="PhylomeDB" id="P07315"/>
<dbReference type="PathwayCommons" id="P07315"/>
<dbReference type="SignaLink" id="P07315"/>
<dbReference type="SIGNOR" id="P07315"/>
<dbReference type="BioGRID-ORCS" id="1420">
    <property type="hits" value="18 hits in 1151 CRISPR screens"/>
</dbReference>
<dbReference type="GeneWiki" id="CRYGC"/>
<dbReference type="GenomeRNAi" id="1420"/>
<dbReference type="Pharos" id="P07315">
    <property type="development level" value="Tbio"/>
</dbReference>
<dbReference type="PRO" id="PR:P07315"/>
<dbReference type="Proteomes" id="UP000005640">
    <property type="component" value="Chromosome 2"/>
</dbReference>
<dbReference type="RNAct" id="P07315">
    <property type="molecule type" value="protein"/>
</dbReference>
<dbReference type="Bgee" id="ENSG00000163254">
    <property type="expression patterns" value="Expressed in male germ line stem cell (sensu Vertebrata) in testis and 9 other cell types or tissues"/>
</dbReference>
<dbReference type="ExpressionAtlas" id="P07315">
    <property type="expression patterns" value="baseline and differential"/>
</dbReference>
<dbReference type="GO" id="GO:0005737">
    <property type="term" value="C:cytoplasm"/>
    <property type="evidence" value="ECO:0000314"/>
    <property type="project" value="UniProtKB"/>
</dbReference>
<dbReference type="GO" id="GO:0005634">
    <property type="term" value="C:nucleus"/>
    <property type="evidence" value="ECO:0000314"/>
    <property type="project" value="UniProtKB"/>
</dbReference>
<dbReference type="GO" id="GO:0005212">
    <property type="term" value="F:structural constituent of eye lens"/>
    <property type="evidence" value="ECO:0000318"/>
    <property type="project" value="GO_Central"/>
</dbReference>
<dbReference type="GO" id="GO:0002088">
    <property type="term" value="P:lens development in camera-type eye"/>
    <property type="evidence" value="ECO:0000318"/>
    <property type="project" value="GO_Central"/>
</dbReference>
<dbReference type="GO" id="GO:0007601">
    <property type="term" value="P:visual perception"/>
    <property type="evidence" value="ECO:0000315"/>
    <property type="project" value="UniProtKB"/>
</dbReference>
<dbReference type="FunFam" id="2.60.20.10:FF:000001">
    <property type="entry name" value="Crystallin gamma S"/>
    <property type="match status" value="1"/>
</dbReference>
<dbReference type="FunFam" id="2.60.20.10:FF:000003">
    <property type="entry name" value="Crystallin gamma S"/>
    <property type="match status" value="1"/>
</dbReference>
<dbReference type="Gene3D" id="2.60.20.10">
    <property type="entry name" value="Crystallins"/>
    <property type="match status" value="2"/>
</dbReference>
<dbReference type="InterPro" id="IPR050252">
    <property type="entry name" value="Beta/Gamma-Crystallin"/>
</dbReference>
<dbReference type="InterPro" id="IPR001064">
    <property type="entry name" value="Beta/gamma_crystallin"/>
</dbReference>
<dbReference type="InterPro" id="IPR011024">
    <property type="entry name" value="G_crystallin-like"/>
</dbReference>
<dbReference type="PANTHER" id="PTHR11818">
    <property type="entry name" value="BETA/GAMMA CRYSTALLIN"/>
    <property type="match status" value="1"/>
</dbReference>
<dbReference type="PANTHER" id="PTHR11818:SF32">
    <property type="entry name" value="GAMMA-CRYSTALLIN C"/>
    <property type="match status" value="1"/>
</dbReference>
<dbReference type="Pfam" id="PF00030">
    <property type="entry name" value="Crystall"/>
    <property type="match status" value="2"/>
</dbReference>
<dbReference type="PRINTS" id="PR01367">
    <property type="entry name" value="BGCRYSTALLIN"/>
</dbReference>
<dbReference type="SMART" id="SM00247">
    <property type="entry name" value="XTALbg"/>
    <property type="match status" value="2"/>
</dbReference>
<dbReference type="SUPFAM" id="SSF49695">
    <property type="entry name" value="gamma-Crystallin-like"/>
    <property type="match status" value="1"/>
</dbReference>
<dbReference type="PROSITE" id="PS50915">
    <property type="entry name" value="CRYSTALLIN_BETA_GAMMA"/>
    <property type="match status" value="4"/>
</dbReference>
<comment type="function">
    <text>Crystallins are the dominant structural components of the vertebrate eye lens.</text>
</comment>
<comment type="subunit">
    <text evidence="1">Monomer.</text>
</comment>
<comment type="interaction">
    <interactant intactId="EBI-6875941">
        <id>P07315</id>
    </interactant>
    <interactant intactId="EBI-6875961">
        <id>P02489</id>
        <label>CRYAA</label>
    </interactant>
    <organismsDiffer>false</organismsDiffer>
    <experiments>3</experiments>
</comment>
<comment type="interaction">
    <interactant intactId="EBI-6875941">
        <id>P07315</id>
    </interactant>
    <interactant intactId="EBI-739060">
        <id>P02511</id>
        <label>CRYAB</label>
    </interactant>
    <organismsDiffer>false</organismsDiffer>
    <experiments>3</experiments>
</comment>
<comment type="interaction">
    <interactant intactId="EBI-6875941">
        <id>P07315</id>
    </interactant>
    <interactant intactId="EBI-21835066">
        <id>P07316</id>
        <label>CRYGB</label>
    </interactant>
    <organismsDiffer>false</organismsDiffer>
    <experiments>2</experiments>
</comment>
<comment type="interaction">
    <interactant intactId="EBI-6875941">
        <id>P07315</id>
    </interactant>
    <interactant intactId="EBI-2813981">
        <id>Q9C029</id>
        <label>TRIM7</label>
    </interactant>
    <organismsDiffer>false</organismsDiffer>
    <experiments>3</experiments>
</comment>
<comment type="domain">
    <text>Has a two-domain beta-structure, folded into four very similar Greek key motifs.</text>
</comment>
<comment type="mass spectrometry" mass="20747.0" error="0.2" method="Electrospray" evidence="7"/>
<comment type="disease" evidence="3 4 5 6 8 10 11 12 13 14">
    <disease id="DI-01425">
        <name>Cataract 2, multiple types</name>
        <acronym>CTRCT2</acronym>
        <description>An opacification of the crystalline lens of the eye that frequently results in visual impairment or blindness. Opacities vary in morphology, are often confined to a portion of the lens, and may be static or progressive. CTRCT2 includes Coppock-like cataract, among others. Coppock-like cataract is a congenital pulverulent disk-like opacity involving the embryonic nucleus with many tiny white dots in the lamellar portion of the lens. It is usually bilateral and dominantly inherited. In some cases, CTRCT2 is associated with microcornea without any other systemic anomaly or dysmorphism. Microcornea is defined by a corneal diameter inferior to 10 mm in both meridians in an otherwise normal eye.</description>
        <dbReference type="MIM" id="604307"/>
    </disease>
    <text>The disease is caused by variants affecting the gene represented in this entry.</text>
</comment>
<comment type="similarity">
    <text evidence="17">Belongs to the beta/gamma-crystallin family.</text>
</comment>
<comment type="online information" name="Eye disease Crystallin, gamma-C (CRYGC)">
    <link uri="https://databases.lovd.nl/shared/genes/CRYGC"/>
    <text>Leiden Open Variation Database (LOVD)</text>
</comment>
<evidence type="ECO:0000250" key="1"/>
<evidence type="ECO:0000255" key="2">
    <source>
        <dbReference type="PROSITE-ProRule" id="PRU00028"/>
    </source>
</evidence>
<evidence type="ECO:0000269" key="3">
    <source>
    </source>
</evidence>
<evidence type="ECO:0000269" key="4">
    <source>
    </source>
</evidence>
<evidence type="ECO:0000269" key="5">
    <source>
    </source>
</evidence>
<evidence type="ECO:0000269" key="6">
    <source>
    </source>
</evidence>
<evidence type="ECO:0000269" key="7">
    <source>
    </source>
</evidence>
<evidence type="ECO:0000269" key="8">
    <source>
    </source>
</evidence>
<evidence type="ECO:0000269" key="9">
    <source>
    </source>
</evidence>
<evidence type="ECO:0000269" key="10">
    <source>
    </source>
</evidence>
<evidence type="ECO:0000269" key="11">
    <source>
    </source>
</evidence>
<evidence type="ECO:0000269" key="12">
    <source>
    </source>
</evidence>
<evidence type="ECO:0000269" key="13">
    <source>
    </source>
</evidence>
<evidence type="ECO:0000269" key="14">
    <source>
    </source>
</evidence>
<evidence type="ECO:0000269" key="15">
    <source>
    </source>
</evidence>
<evidence type="ECO:0000303" key="16">
    <source>
    </source>
</evidence>
<evidence type="ECO:0000305" key="17"/>
<evidence type="ECO:0007829" key="18">
    <source>
        <dbReference type="PDB" id="2NBR"/>
    </source>
</evidence>
<reference key="1">
    <citation type="journal article" date="1985" name="Gene">
        <title>Two human gamma-crystallin genes are linked and riddled with Alu-repeats.</title>
        <authorList>
            <person name="den Dunnen J.T."/>
            <person name="Moormann R.J.M."/>
            <person name="Cremers F.P.M."/>
            <person name="Schoenmakers J.G.G."/>
        </authorList>
    </citation>
    <scope>NUCLEOTIDE SEQUENCE [GENOMIC DNA]</scope>
</reference>
<reference key="2">
    <citation type="journal article" date="1985" name="Mol. Cell. Biol.">
        <title>Structural and evolutionary relationships among five members of the human gamma-crystallin gene family.</title>
        <authorList>
            <person name="Meakin S.O."/>
            <person name="Breitman M.L."/>
            <person name="Tsui L.-C."/>
        </authorList>
    </citation>
    <scope>NUCLEOTIDE SEQUENCE [GENOMIC DNA]</scope>
</reference>
<reference key="3">
    <citation type="journal article" date="1989" name="Gene">
        <title>Nucleotide sequence of the rat gamma-crystallin gene region and comparison with an orthologous human region.</title>
        <authorList>
            <person name="den Dunnen J.T."/>
            <person name="van Neck J.W."/>
            <person name="Cremers F.P.M."/>
            <person name="Lubsen N.H."/>
            <person name="Schoenmakers J.G.G."/>
        </authorList>
    </citation>
    <scope>NUCLEOTIDE SEQUENCE [GENOMIC DNA]</scope>
</reference>
<reference key="4">
    <citation type="journal article" date="1996" name="J. Biol. Chem.">
        <title>Cloning, expression, and chaperone-like activity of human alphaA-crystallin.</title>
        <authorList>
            <person name="Andley U.P."/>
            <person name="Mathur S."/>
            <person name="Griest T.A."/>
            <person name="Petrash J.M."/>
        </authorList>
    </citation>
    <scope>NUCLEOTIDE SEQUENCE [MRNA]</scope>
    <source>
        <tissue>Lens</tissue>
    </source>
</reference>
<reference key="5">
    <citation type="journal article" date="2005" name="Nature">
        <title>Generation and annotation of the DNA sequences of human chromosomes 2 and 4.</title>
        <authorList>
            <person name="Hillier L.W."/>
            <person name="Graves T.A."/>
            <person name="Fulton R.S."/>
            <person name="Fulton L.A."/>
            <person name="Pepin K.H."/>
            <person name="Minx P."/>
            <person name="Wagner-McPherson C."/>
            <person name="Layman D."/>
            <person name="Wylie K."/>
            <person name="Sekhon M."/>
            <person name="Becker M.C."/>
            <person name="Fewell G.A."/>
            <person name="Delehaunty K.D."/>
            <person name="Miner T.L."/>
            <person name="Nash W.E."/>
            <person name="Kremitzki C."/>
            <person name="Oddy L."/>
            <person name="Du H."/>
            <person name="Sun H."/>
            <person name="Bradshaw-Cordum H."/>
            <person name="Ali J."/>
            <person name="Carter J."/>
            <person name="Cordes M."/>
            <person name="Harris A."/>
            <person name="Isak A."/>
            <person name="van Brunt A."/>
            <person name="Nguyen C."/>
            <person name="Du F."/>
            <person name="Courtney L."/>
            <person name="Kalicki J."/>
            <person name="Ozersky P."/>
            <person name="Abbott S."/>
            <person name="Armstrong J."/>
            <person name="Belter E.A."/>
            <person name="Caruso L."/>
            <person name="Cedroni M."/>
            <person name="Cotton M."/>
            <person name="Davidson T."/>
            <person name="Desai A."/>
            <person name="Elliott G."/>
            <person name="Erb T."/>
            <person name="Fronick C."/>
            <person name="Gaige T."/>
            <person name="Haakenson W."/>
            <person name="Haglund K."/>
            <person name="Holmes A."/>
            <person name="Harkins R."/>
            <person name="Kim K."/>
            <person name="Kruchowski S.S."/>
            <person name="Strong C.M."/>
            <person name="Grewal N."/>
            <person name="Goyea E."/>
            <person name="Hou S."/>
            <person name="Levy A."/>
            <person name="Martinka S."/>
            <person name="Mead K."/>
            <person name="McLellan M.D."/>
            <person name="Meyer R."/>
            <person name="Randall-Maher J."/>
            <person name="Tomlinson C."/>
            <person name="Dauphin-Kohlberg S."/>
            <person name="Kozlowicz-Reilly A."/>
            <person name="Shah N."/>
            <person name="Swearengen-Shahid S."/>
            <person name="Snider J."/>
            <person name="Strong J.T."/>
            <person name="Thompson J."/>
            <person name="Yoakum M."/>
            <person name="Leonard S."/>
            <person name="Pearman C."/>
            <person name="Trani L."/>
            <person name="Radionenko M."/>
            <person name="Waligorski J.E."/>
            <person name="Wang C."/>
            <person name="Rock S.M."/>
            <person name="Tin-Wollam A.-M."/>
            <person name="Maupin R."/>
            <person name="Latreille P."/>
            <person name="Wendl M.C."/>
            <person name="Yang S.-P."/>
            <person name="Pohl C."/>
            <person name="Wallis J.W."/>
            <person name="Spieth J."/>
            <person name="Bieri T.A."/>
            <person name="Berkowicz N."/>
            <person name="Nelson J.O."/>
            <person name="Osborne J."/>
            <person name="Ding L."/>
            <person name="Meyer R."/>
            <person name="Sabo A."/>
            <person name="Shotland Y."/>
            <person name="Sinha P."/>
            <person name="Wohldmann P.E."/>
            <person name="Cook L.L."/>
            <person name="Hickenbotham M.T."/>
            <person name="Eldred J."/>
            <person name="Williams D."/>
            <person name="Jones T.A."/>
            <person name="She X."/>
            <person name="Ciccarelli F.D."/>
            <person name="Izaurralde E."/>
            <person name="Taylor J."/>
            <person name="Schmutz J."/>
            <person name="Myers R.M."/>
            <person name="Cox D.R."/>
            <person name="Huang X."/>
            <person name="McPherson J.D."/>
            <person name="Mardis E.R."/>
            <person name="Clifton S.W."/>
            <person name="Warren W.C."/>
            <person name="Chinwalla A.T."/>
            <person name="Eddy S.R."/>
            <person name="Marra M.A."/>
            <person name="Ovcharenko I."/>
            <person name="Furey T.S."/>
            <person name="Miller W."/>
            <person name="Eichler E.E."/>
            <person name="Bork P."/>
            <person name="Suyama M."/>
            <person name="Torrents D."/>
            <person name="Waterston R.H."/>
            <person name="Wilson R.K."/>
        </authorList>
    </citation>
    <scope>NUCLEOTIDE SEQUENCE [LARGE SCALE GENOMIC DNA]</scope>
</reference>
<reference key="6">
    <citation type="submission" date="2005-09" db="EMBL/GenBank/DDBJ databases">
        <authorList>
            <person name="Mural R.J."/>
            <person name="Istrail S."/>
            <person name="Sutton G.G."/>
            <person name="Florea L."/>
            <person name="Halpern A.L."/>
            <person name="Mobarry C.M."/>
            <person name="Lippert R."/>
            <person name="Walenz B."/>
            <person name="Shatkay H."/>
            <person name="Dew I."/>
            <person name="Miller J.R."/>
            <person name="Flanigan M.J."/>
            <person name="Edwards N.J."/>
            <person name="Bolanos R."/>
            <person name="Fasulo D."/>
            <person name="Halldorsson B.V."/>
            <person name="Hannenhalli S."/>
            <person name="Turner R."/>
            <person name="Yooseph S."/>
            <person name="Lu F."/>
            <person name="Nusskern D.R."/>
            <person name="Shue B.C."/>
            <person name="Zheng X.H."/>
            <person name="Zhong F."/>
            <person name="Delcher A.L."/>
            <person name="Huson D.H."/>
            <person name="Kravitz S.A."/>
            <person name="Mouchard L."/>
            <person name="Reinert K."/>
            <person name="Remington K.A."/>
            <person name="Clark A.G."/>
            <person name="Waterman M.S."/>
            <person name="Eichler E.E."/>
            <person name="Adams M.D."/>
            <person name="Hunkapiller M.W."/>
            <person name="Myers E.W."/>
            <person name="Venter J.C."/>
        </authorList>
    </citation>
    <scope>NUCLEOTIDE SEQUENCE [LARGE SCALE GENOMIC DNA]</scope>
</reference>
<reference key="7">
    <citation type="journal article" date="2004" name="Genome Res.">
        <title>The status, quality, and expansion of the NIH full-length cDNA project: the Mammalian Gene Collection (MGC).</title>
        <authorList>
            <consortium name="The MGC Project Team"/>
        </authorList>
    </citation>
    <scope>NUCLEOTIDE SEQUENCE [LARGE SCALE MRNA]</scope>
</reference>
<reference key="8">
    <citation type="journal article" date="1997" name="J. Biol. Chem.">
        <title>Sequence analysis of betaA3, betaB3, and betaA4 crystallins completes the identification of the major proteins in young human lens.</title>
        <authorList>
            <person name="Lampi K.J."/>
            <person name="Ma Z."/>
            <person name="Shih M."/>
            <person name="Shearer T.R."/>
            <person name="Smith J.B."/>
            <person name="Smith D.L."/>
            <person name="David L.L."/>
        </authorList>
    </citation>
    <scope>PROTEIN SEQUENCE OF 2-26</scope>
</reference>
<reference key="9">
    <citation type="journal article" date="2003" name="Protein Sci.">
        <title>Methylation and carbamylation of human gamma-crystallins.</title>
        <authorList>
            <person name="Lapko V.N."/>
            <person name="Smith D.L."/>
            <person name="Smith J.B."/>
        </authorList>
    </citation>
    <scope>METHYLATION AT CYS-23</scope>
    <scope>MASS SPECTROMETRY</scope>
</reference>
<reference key="10">
    <citation type="journal article" date="2012" name="Mol. Vis.">
        <title>A nonsense mutation of CRYGC associated with autosomal dominant congenital nuclear cataracts and microcornea in a Chinese pedigree.</title>
        <authorList>
            <person name="Guo Y."/>
            <person name="Su D."/>
            <person name="Li Q."/>
            <person name="Yang Z."/>
            <person name="Ma Z."/>
            <person name="Ma X."/>
            <person name="Zhu S."/>
        </authorList>
    </citation>
    <scope>INVOLVEMENT IN CTRCT2</scope>
</reference>
<reference key="11">
    <citation type="journal article" date="2003" name="Biochem. Biophys. Res. Commun.">
        <title>Homology models of human gamma-crystallins: structural study of the extensive charge network in gamma-crystallins.</title>
        <authorList>
            <person name="Salim A."/>
            <person name="Zaidi Z.H."/>
        </authorList>
    </citation>
    <scope>3D-STRUCTURE MODELING</scope>
</reference>
<reference key="12">
    <citation type="journal article" date="1999" name="Am. J. Hum. Genet.">
        <title>The gamma-crystallins and human cataracts: a puzzle made clearer.</title>
        <authorList>
            <person name="Heon E."/>
            <person name="Priston M."/>
            <person name="Schorderet D.F."/>
            <person name="Billingsley G.D."/>
            <person name="Girard P.O."/>
            <person name="Lubsen N."/>
            <person name="Munier F.L."/>
        </authorList>
    </citation>
    <scope>VARIANT CTRCT2 PRO-5</scope>
</reference>
<reference key="13">
    <citation type="journal article" date="2000" name="Am. J. Hum. Genet.">
        <authorList>
            <person name="Heon E."/>
            <person name="Priston M."/>
            <person name="Schorderet D.F."/>
            <person name="Billingsley G.D."/>
            <person name="Girard P.O."/>
            <person name="Lubsen N."/>
            <person name="Munier F.L."/>
        </authorList>
    </citation>
    <scope>ERRATUM OF PUBMED:10521291</scope>
</reference>
<reference key="14">
    <citation type="journal article" date="2000" name="Hum. Genet.">
        <title>A 5-base insertion in the gammaC-crystallin gene is associated with autosomal dominant variable zonular pulverulent cataract.</title>
        <authorList>
            <person name="Ren Z."/>
            <person name="Li A."/>
            <person name="Shastry B.S."/>
            <person name="Padma T."/>
            <person name="Ayyagari R."/>
            <person name="Scott M.H."/>
            <person name="Parks M.M."/>
            <person name="Kaiser-Kupfer M.I."/>
            <person name="Hejtmancik J.F."/>
        </authorList>
    </citation>
    <scope>INVOLVEMENT IN CTRCT2</scope>
</reference>
<reference key="15">
    <citation type="journal article" date="2002" name="J. Med. Genet.">
        <title>Novel mutations in the gamma-crystallin genes cause autosomal dominant congenital cataracts.</title>
        <authorList>
            <person name="Santhiya S.T."/>
            <person name="Shyam Manohar M."/>
            <person name="Rawlley D."/>
            <person name="Vijayalakshmi P."/>
            <person name="Namperumalsamy P."/>
            <person name="Gopinath P.M."/>
            <person name="Loester J."/>
            <person name="Graw J."/>
        </authorList>
    </citation>
    <scope>VARIANT CTRCT2 TRP-168</scope>
    <scope>VARIANT HIS-48</scope>
</reference>
<reference key="16">
    <citation type="journal article" date="2003" name="Invest. Ophthalmol. Vis. Sci.">
        <title>Alteration of protein-protein interactions of congenital cataract crystallin mutants.</title>
        <authorList>
            <person name="Fu L."/>
            <person name="Liang J.J.-N."/>
        </authorList>
    </citation>
    <scope>CHARACTERIZATION OF VARIANT CTRCT2 PRO-5</scope>
</reference>
<reference key="17">
    <citation type="journal article" date="2008" name="Mol. Vis.">
        <title>Crystallin gene mutations in Indian families with inherited pediatric cataract.</title>
        <authorList>
            <person name="Devi R.R."/>
            <person name="Yao W."/>
            <person name="Vijayalakshmi P."/>
            <person name="Sergeev Y.V."/>
            <person name="Sundaresan P."/>
            <person name="Hejtmancik J.F."/>
        </authorList>
    </citation>
    <scope>VARIANT CTRCT2 TRP-168</scope>
</reference>
<reference key="18">
    <citation type="journal article" date="2011" name="Mol. Vis.">
        <title>Mutation screening and genotype phenotype correlation of alpha-crystallin, gamma-crystallin and GJA8 gene in congenital cataract.</title>
        <authorList>
            <person name="Kumar M."/>
            <person name="Agarwal T."/>
            <person name="Khokhar S."/>
            <person name="Kumar M."/>
            <person name="Kaur P."/>
            <person name="Roy T.S."/>
            <person name="Dada R."/>
        </authorList>
    </citation>
    <scope>VARIANT HIS-48</scope>
</reference>
<reference key="19">
    <citation type="journal article" date="2012" name="Hum. Mutat.">
        <title>A novel mutation impairing the tertiary structure and stability of gammaC-crystallin (CRYGC) leads to cataract formation in humans and zebrafish lens.</title>
        <authorList>
            <person name="Li X.Q."/>
            <person name="Cai H.C."/>
            <person name="Zhou S.Y."/>
            <person name="Yang J.H."/>
            <person name="Xi Y.B."/>
            <person name="Gao X.B."/>
            <person name="Zhao W.J."/>
            <person name="Li P."/>
            <person name="Zhao G.Y."/>
            <person name="Tong Y."/>
            <person name="Bao F.C."/>
            <person name="Ma Y."/>
            <person name="Wang S."/>
            <person name="Yan Y.B."/>
            <person name="Lu C.L."/>
            <person name="Ma X."/>
        </authorList>
    </citation>
    <scope>VARIANT CTRCT2 CYS-129</scope>
</reference>
<reference key="20">
    <citation type="journal article" date="2017" name="Mol. Vis.">
        <title>Mutations in crystallin genes result in congenital cataract associated with other ocular abnormalities.</title>
        <authorList>
            <person name="Sun Z."/>
            <person name="Zhou Q."/>
            <person name="Li H."/>
            <person name="Yang L."/>
            <person name="Wu S."/>
            <person name="Sui R."/>
        </authorList>
    </citation>
    <scope>VARIANTS CTRCT2 HIS-48 AND 144-TYR--TYR-174 DEL</scope>
</reference>
<reference key="21">
    <citation type="journal article" date="2018" name="Orphanet J. Rare Dis.">
        <title>Clinical and genetic characteristics of Chinese patients with familial or sporadic pediatric cataract.</title>
        <authorList>
            <person name="Li J."/>
            <person name="Leng Y."/>
            <person name="Han S."/>
            <person name="Yan L."/>
            <person name="Lu C."/>
            <person name="Luo Y."/>
            <person name="Zhang X."/>
            <person name="Cao L."/>
        </authorList>
    </citation>
    <scope>VARIANT CTRCT2 PHE-78</scope>
</reference>
<reference key="22">
    <citation type="journal article" date="2020" name="Orphanet J. Rare Dis.">
        <title>The genetic landscape of crystallins in congenital cataract.</title>
        <authorList>
            <person name="Berry V."/>
            <person name="Ionides A."/>
            <person name="Pontikos N."/>
            <person name="Georgiou M."/>
            <person name="Yu J."/>
            <person name="Ocaka L.A."/>
            <person name="Moore A.T."/>
            <person name="Quinlan R.A."/>
            <person name="Michaelides M."/>
        </authorList>
    </citation>
    <scope>VARIANT CTRCT2 PRO-5</scope>
</reference>
<name>CRGC_HUMAN</name>